<reference key="1">
    <citation type="journal article" date="1991" name="Biochim. Biophys. Acta">
        <title>Cloning, nucleotide sequence and expression in Escherichia coli of two cobalt-containing nitrile hydratase genes from Rhodococcus rhodochrous J1.</title>
        <authorList>
            <person name="Kobayashi M."/>
            <person name="Nishiyama M."/>
            <person name="Nagasawa T."/>
            <person name="Horinouchi S."/>
            <person name="Beppu T."/>
            <person name="Yamada H."/>
        </authorList>
    </citation>
    <scope>NUCLEOTIDE SEQUENCE [GENOMIC DNA]</scope>
    <scope>PARTIAL PROTEIN SEQUENCE</scope>
    <source>
        <strain>J1</strain>
    </source>
</reference>
<comment type="function">
    <text>NHase catalyzes the hydration of various nitrile compounds to the corresponding amides.</text>
</comment>
<comment type="catalytic activity">
    <reaction>
        <text>an aliphatic primary amide = an aliphatic nitrile + H2O</text>
        <dbReference type="Rhea" id="RHEA:12673"/>
        <dbReference type="ChEBI" id="CHEBI:15377"/>
        <dbReference type="ChEBI" id="CHEBI:65285"/>
        <dbReference type="ChEBI" id="CHEBI:80291"/>
        <dbReference type="EC" id="4.2.1.84"/>
    </reaction>
</comment>
<comment type="subunit">
    <text>Heterodimer of an alpha and a beta chain.</text>
</comment>
<comment type="interaction">
    <interactant intactId="EBI-15729954">
        <id>P29379</id>
    </interactant>
    <interactant intactId="EBI-15729943">
        <id>P29378</id>
    </interactant>
    <organismsDiffer>false</organismsDiffer>
    <experiments>2</experiments>
</comment>
<comment type="induction">
    <text>By cobalt and urea or cyclohexanecarboxamide.</text>
</comment>
<comment type="biotechnology">
    <text>Industrial production of acrylamide is now being developed using some of these enzymes.</text>
</comment>
<comment type="similarity">
    <text evidence="2">Belongs to the nitrile hydratase subunit beta family.</text>
</comment>
<sequence>MDGIHDLGGRAGLGPIKPESDEPVFHSDWERSVLTMFPAMALAGAFNLDQFRGAMEQIPPHDYLTSQYYEHWMHAMIHHGIEAGIFDSDELDRRTQYYMDHPDDTTPTRQDPQLVETISQLITHGADYRRPTDTEAAFAVGDKVIVRSDASPNTHTRRAGYVRGRVGEVVATHGAYVFPDTNALGAGESPEHLYTVRFSATELWGEPAAPNVVNHIDVFEPYLLPA</sequence>
<feature type="chain" id="PRO_0000186833" description="Low-molecular weight cobalt-containing nitrile hydratase subunit beta">
    <location>
        <begin position="1"/>
        <end position="226"/>
    </location>
</feature>
<feature type="region of interest" description="Disordered" evidence="1">
    <location>
        <begin position="1"/>
        <end position="22"/>
    </location>
</feature>
<protein>
    <recommendedName>
        <fullName>Low-molecular weight cobalt-containing nitrile hydratase subunit beta</fullName>
        <shortName>L-NHase</shortName>
        <shortName>L-nitrilase</shortName>
        <ecNumber>4.2.1.84</ecNumber>
    </recommendedName>
</protein>
<name>NHB2_RHORH</name>
<proteinExistence type="evidence at protein level"/>
<organism>
    <name type="scientific">Rhodococcus rhodochrous</name>
    <dbReference type="NCBI Taxonomy" id="1829"/>
    <lineage>
        <taxon>Bacteria</taxon>
        <taxon>Bacillati</taxon>
        <taxon>Actinomycetota</taxon>
        <taxon>Actinomycetes</taxon>
        <taxon>Mycobacteriales</taxon>
        <taxon>Nocardiaceae</taxon>
        <taxon>Rhodococcus</taxon>
    </lineage>
</organism>
<evidence type="ECO:0000256" key="1">
    <source>
        <dbReference type="SAM" id="MobiDB-lite"/>
    </source>
</evidence>
<evidence type="ECO:0000305" key="2"/>
<keyword id="KW-0903">Direct protein sequencing</keyword>
<keyword id="KW-0456">Lyase</keyword>
<dbReference type="EC" id="4.2.1.84"/>
<dbReference type="EMBL" id="X64360">
    <property type="protein sequence ID" value="CAA45711.1"/>
    <property type="molecule type" value="Genomic_DNA"/>
</dbReference>
<dbReference type="PIR" id="S19715">
    <property type="entry name" value="S19715"/>
</dbReference>
<dbReference type="RefSeq" id="WP_088899669.1">
    <property type="nucleotide sequence ID" value="NZ_CP027558.1"/>
</dbReference>
<dbReference type="SMR" id="P29379"/>
<dbReference type="DIP" id="DIP-46300N"/>
<dbReference type="IntAct" id="P29379">
    <property type="interactions" value="1"/>
</dbReference>
<dbReference type="BRENDA" id="4.2.1.84">
    <property type="organism ID" value="5395"/>
</dbReference>
<dbReference type="GO" id="GO:0018822">
    <property type="term" value="F:nitrile hydratase activity"/>
    <property type="evidence" value="ECO:0007669"/>
    <property type="project" value="UniProtKB-EC"/>
</dbReference>
<dbReference type="GO" id="GO:0046914">
    <property type="term" value="F:transition metal ion binding"/>
    <property type="evidence" value="ECO:0007669"/>
    <property type="project" value="InterPro"/>
</dbReference>
<dbReference type="Gene3D" id="2.30.30.50">
    <property type="match status" value="1"/>
</dbReference>
<dbReference type="Gene3D" id="1.10.472.20">
    <property type="entry name" value="Nitrile hydratase, beta subunit"/>
    <property type="match status" value="1"/>
</dbReference>
<dbReference type="InterPro" id="IPR049054">
    <property type="entry name" value="CN_hydtase_beta-like_N"/>
</dbReference>
<dbReference type="InterPro" id="IPR042262">
    <property type="entry name" value="CN_hydtase_beta_C"/>
</dbReference>
<dbReference type="InterPro" id="IPR024690">
    <property type="entry name" value="CN_hydtase_beta_dom_C"/>
</dbReference>
<dbReference type="InterPro" id="IPR008990">
    <property type="entry name" value="Elect_transpt_acc-like_dom_sf"/>
</dbReference>
<dbReference type="InterPro" id="IPR003168">
    <property type="entry name" value="Nitrile_hydratase_bsu"/>
</dbReference>
<dbReference type="NCBIfam" id="TIGR03888">
    <property type="entry name" value="nitrile_beta"/>
    <property type="match status" value="1"/>
</dbReference>
<dbReference type="Pfam" id="PF02211">
    <property type="entry name" value="NHase_beta_C"/>
    <property type="match status" value="1"/>
</dbReference>
<dbReference type="Pfam" id="PF21006">
    <property type="entry name" value="NHase_beta_N"/>
    <property type="match status" value="1"/>
</dbReference>
<dbReference type="PIRSF" id="PIRSF001427">
    <property type="entry name" value="NHase_beta"/>
    <property type="match status" value="1"/>
</dbReference>
<dbReference type="SUPFAM" id="SSF50090">
    <property type="entry name" value="Electron transport accessory proteins"/>
    <property type="match status" value="1"/>
</dbReference>
<accession>P29379</accession>